<accession>Q8P6B1</accession>
<sequence length="348" mass="35999">MSIEWIQGACAVPDARVQAASLARQEQLTKPPGALGRLEQLAVQFAAWQRNEQPTVQRIWIAVYAADHGVAAEGVSMFPQAVTGEMVRNFARGGAAIAVLARELGARLEVVNLGVVNDPGELPRVRRAWIAPACANICEQAAMTPAQLRDALAAGAESIAQARTCGTQLFVGGEMGIGNSTAAAALSCALLSQFPQAMAGAGTGLDAEGIAHKATVITRALAVHADAATPLERLRRLGGFEIAALVGAYIAAAQAGIPVLVDGFISTAAALVAVHLNPGVREWLLFGHRSQERGHAALLRALEAEPLLQLDLRLGEASGAAVAIPLLRTACALHNGMATFAEAGVSDA</sequence>
<feature type="chain" id="PRO_0000167080" description="Nicotinate-nucleotide--dimethylbenzimidazole phosphoribosyltransferase">
    <location>
        <begin position="1"/>
        <end position="348"/>
    </location>
</feature>
<feature type="active site" description="Proton acceptor" evidence="1">
    <location>
        <position position="316"/>
    </location>
</feature>
<reference key="1">
    <citation type="journal article" date="2002" name="Nature">
        <title>Comparison of the genomes of two Xanthomonas pathogens with differing host specificities.</title>
        <authorList>
            <person name="da Silva A.C.R."/>
            <person name="Ferro J.A."/>
            <person name="Reinach F.C."/>
            <person name="Farah C.S."/>
            <person name="Furlan L.R."/>
            <person name="Quaggio R.B."/>
            <person name="Monteiro-Vitorello C.B."/>
            <person name="Van Sluys M.A."/>
            <person name="Almeida N.F. Jr."/>
            <person name="Alves L.M.C."/>
            <person name="do Amaral A.M."/>
            <person name="Bertolini M.C."/>
            <person name="Camargo L.E.A."/>
            <person name="Camarotte G."/>
            <person name="Cannavan F."/>
            <person name="Cardozo J."/>
            <person name="Chambergo F."/>
            <person name="Ciapina L.P."/>
            <person name="Cicarelli R.M.B."/>
            <person name="Coutinho L.L."/>
            <person name="Cursino-Santos J.R."/>
            <person name="El-Dorry H."/>
            <person name="Faria J.B."/>
            <person name="Ferreira A.J.S."/>
            <person name="Ferreira R.C.C."/>
            <person name="Ferro M.I.T."/>
            <person name="Formighieri E.F."/>
            <person name="Franco M.C."/>
            <person name="Greggio C.C."/>
            <person name="Gruber A."/>
            <person name="Katsuyama A.M."/>
            <person name="Kishi L.T."/>
            <person name="Leite R.P."/>
            <person name="Lemos E.G.M."/>
            <person name="Lemos M.V.F."/>
            <person name="Locali E.C."/>
            <person name="Machado M.A."/>
            <person name="Madeira A.M.B.N."/>
            <person name="Martinez-Rossi N.M."/>
            <person name="Martins E.C."/>
            <person name="Meidanis J."/>
            <person name="Menck C.F.M."/>
            <person name="Miyaki C.Y."/>
            <person name="Moon D.H."/>
            <person name="Moreira L.M."/>
            <person name="Novo M.T.M."/>
            <person name="Okura V.K."/>
            <person name="Oliveira M.C."/>
            <person name="Oliveira V.R."/>
            <person name="Pereira H.A."/>
            <person name="Rossi A."/>
            <person name="Sena J.A.D."/>
            <person name="Silva C."/>
            <person name="de Souza R.F."/>
            <person name="Spinola L.A.F."/>
            <person name="Takita M.A."/>
            <person name="Tamura R.E."/>
            <person name="Teixeira E.C."/>
            <person name="Tezza R.I.D."/>
            <person name="Trindade dos Santos M."/>
            <person name="Truffi D."/>
            <person name="Tsai S.M."/>
            <person name="White F.F."/>
            <person name="Setubal J.C."/>
            <person name="Kitajima J.P."/>
        </authorList>
    </citation>
    <scope>NUCLEOTIDE SEQUENCE [LARGE SCALE GENOMIC DNA]</scope>
    <source>
        <strain>ATCC 33913 / DSM 3586 / NCPPB 528 / LMG 568 / P 25</strain>
    </source>
</reference>
<protein>
    <recommendedName>
        <fullName evidence="1">Nicotinate-nucleotide--dimethylbenzimidazole phosphoribosyltransferase</fullName>
        <shortName evidence="1">NN:DBI PRT</shortName>
        <ecNumber evidence="1">2.4.2.21</ecNumber>
    </recommendedName>
    <alternativeName>
        <fullName evidence="1">N(1)-alpha-phosphoribosyltransferase</fullName>
    </alternativeName>
</protein>
<organism>
    <name type="scientific">Xanthomonas campestris pv. campestris (strain ATCC 33913 / DSM 3586 / NCPPB 528 / LMG 568 / P 25)</name>
    <dbReference type="NCBI Taxonomy" id="190485"/>
    <lineage>
        <taxon>Bacteria</taxon>
        <taxon>Pseudomonadati</taxon>
        <taxon>Pseudomonadota</taxon>
        <taxon>Gammaproteobacteria</taxon>
        <taxon>Lysobacterales</taxon>
        <taxon>Lysobacteraceae</taxon>
        <taxon>Xanthomonas</taxon>
    </lineage>
</organism>
<evidence type="ECO:0000255" key="1">
    <source>
        <dbReference type="HAMAP-Rule" id="MF_00230"/>
    </source>
</evidence>
<comment type="function">
    <text evidence="1">Catalyzes the synthesis of alpha-ribazole-5'-phosphate from nicotinate mononucleotide (NAMN) and 5,6-dimethylbenzimidazole (DMB).</text>
</comment>
<comment type="catalytic activity">
    <reaction evidence="1">
        <text>5,6-dimethylbenzimidazole + nicotinate beta-D-ribonucleotide = alpha-ribazole 5'-phosphate + nicotinate + H(+)</text>
        <dbReference type="Rhea" id="RHEA:11196"/>
        <dbReference type="ChEBI" id="CHEBI:15378"/>
        <dbReference type="ChEBI" id="CHEBI:15890"/>
        <dbReference type="ChEBI" id="CHEBI:32544"/>
        <dbReference type="ChEBI" id="CHEBI:57502"/>
        <dbReference type="ChEBI" id="CHEBI:57918"/>
        <dbReference type="EC" id="2.4.2.21"/>
    </reaction>
</comment>
<comment type="pathway">
    <text evidence="1">Nucleoside biosynthesis; alpha-ribazole biosynthesis; alpha-ribazole from 5,6-dimethylbenzimidazole: step 1/2.</text>
</comment>
<comment type="similarity">
    <text evidence="1">Belongs to the CobT family.</text>
</comment>
<dbReference type="EC" id="2.4.2.21" evidence="1"/>
<dbReference type="EMBL" id="AE008922">
    <property type="protein sequence ID" value="AAM42330.1"/>
    <property type="molecule type" value="Genomic_DNA"/>
</dbReference>
<dbReference type="RefSeq" id="NP_638406.1">
    <property type="nucleotide sequence ID" value="NC_003902.1"/>
</dbReference>
<dbReference type="RefSeq" id="WP_011038174.1">
    <property type="nucleotide sequence ID" value="NC_003902.1"/>
</dbReference>
<dbReference type="SMR" id="Q8P6B1"/>
<dbReference type="STRING" id="190485.XCC3059"/>
<dbReference type="EnsemblBacteria" id="AAM42330">
    <property type="protein sequence ID" value="AAM42330"/>
    <property type="gene ID" value="XCC3059"/>
</dbReference>
<dbReference type="KEGG" id="xcc:XCC3059"/>
<dbReference type="PATRIC" id="fig|190485.4.peg.3267"/>
<dbReference type="eggNOG" id="COG2038">
    <property type="taxonomic scope" value="Bacteria"/>
</dbReference>
<dbReference type="HOGENOM" id="CLU_002982_0_0_6"/>
<dbReference type="OrthoDB" id="9781491at2"/>
<dbReference type="UniPathway" id="UPA00061">
    <property type="reaction ID" value="UER00516"/>
</dbReference>
<dbReference type="Proteomes" id="UP000001010">
    <property type="component" value="Chromosome"/>
</dbReference>
<dbReference type="GO" id="GO:0008939">
    <property type="term" value="F:nicotinate-nucleotide-dimethylbenzimidazole phosphoribosyltransferase activity"/>
    <property type="evidence" value="ECO:0007669"/>
    <property type="project" value="UniProtKB-UniRule"/>
</dbReference>
<dbReference type="GO" id="GO:0009236">
    <property type="term" value="P:cobalamin biosynthetic process"/>
    <property type="evidence" value="ECO:0007669"/>
    <property type="project" value="UniProtKB-KW"/>
</dbReference>
<dbReference type="CDD" id="cd02439">
    <property type="entry name" value="DMB-PRT_CobT"/>
    <property type="match status" value="1"/>
</dbReference>
<dbReference type="FunFam" id="3.40.50.10210:FF:000001">
    <property type="entry name" value="Nicotinate-nucleotide--dimethylbenzimidazole phosphoribosyltransferase"/>
    <property type="match status" value="1"/>
</dbReference>
<dbReference type="Gene3D" id="1.10.1610.10">
    <property type="match status" value="1"/>
</dbReference>
<dbReference type="Gene3D" id="3.40.50.10210">
    <property type="match status" value="1"/>
</dbReference>
<dbReference type="HAMAP" id="MF_00230">
    <property type="entry name" value="CobT"/>
    <property type="match status" value="1"/>
</dbReference>
<dbReference type="InterPro" id="IPR003200">
    <property type="entry name" value="Nict_dMeBzImd_PRibTrfase"/>
</dbReference>
<dbReference type="InterPro" id="IPR017846">
    <property type="entry name" value="Nict_dMeBzImd_PRibTrfase_bact"/>
</dbReference>
<dbReference type="InterPro" id="IPR023195">
    <property type="entry name" value="Nict_dMeBzImd_PRibTrfase_N"/>
</dbReference>
<dbReference type="InterPro" id="IPR036087">
    <property type="entry name" value="Nict_dMeBzImd_PRibTrfase_sf"/>
</dbReference>
<dbReference type="NCBIfam" id="TIGR03160">
    <property type="entry name" value="cobT_DBIPRT"/>
    <property type="match status" value="1"/>
</dbReference>
<dbReference type="NCBIfam" id="NF000996">
    <property type="entry name" value="PRK00105.1"/>
    <property type="match status" value="1"/>
</dbReference>
<dbReference type="PANTHER" id="PTHR43463">
    <property type="entry name" value="NICOTINATE-NUCLEOTIDE--DIMETHYLBENZIMIDAZOLE PHOSPHORIBOSYLTRANSFERASE"/>
    <property type="match status" value="1"/>
</dbReference>
<dbReference type="PANTHER" id="PTHR43463:SF1">
    <property type="entry name" value="NICOTINATE-NUCLEOTIDE--DIMETHYLBENZIMIDAZOLE PHOSPHORIBOSYLTRANSFERASE"/>
    <property type="match status" value="1"/>
</dbReference>
<dbReference type="Pfam" id="PF02277">
    <property type="entry name" value="DBI_PRT"/>
    <property type="match status" value="1"/>
</dbReference>
<dbReference type="SUPFAM" id="SSF52733">
    <property type="entry name" value="Nicotinate mononucleotide:5,6-dimethylbenzimidazole phosphoribosyltransferase (CobT)"/>
    <property type="match status" value="1"/>
</dbReference>
<keyword id="KW-0169">Cobalamin biosynthesis</keyword>
<keyword id="KW-0328">Glycosyltransferase</keyword>
<keyword id="KW-1185">Reference proteome</keyword>
<keyword id="KW-0808">Transferase</keyword>
<gene>
    <name evidence="1" type="primary">cobT</name>
    <name type="ordered locus">XCC3059</name>
</gene>
<proteinExistence type="inferred from homology"/>
<name>COBT_XANCP</name>